<protein>
    <recommendedName>
        <fullName>Killer cell lectin-like receptor subfamily G member 1</fullName>
    </recommendedName>
    <alternativeName>
        <fullName>Mast cell function-associated antigen 2F1</fullName>
    </alternativeName>
</protein>
<dbReference type="EMBL" id="AF097357">
    <property type="protein sequence ID" value="AAD03718.1"/>
    <property type="molecule type" value="mRNA"/>
</dbReference>
<dbReference type="EMBL" id="AJ010751">
    <property type="protein sequence ID" value="CAA09342.1"/>
    <property type="molecule type" value="mRNA"/>
</dbReference>
<dbReference type="EMBL" id="AF317727">
    <property type="protein sequence ID" value="AAK40082.1"/>
    <property type="molecule type" value="Genomic_DNA"/>
</dbReference>
<dbReference type="EMBL" id="BC101953">
    <property type="protein sequence ID" value="AAI01954.1"/>
    <property type="molecule type" value="mRNA"/>
</dbReference>
<dbReference type="EMBL" id="BC103546">
    <property type="protein sequence ID" value="AAI03547.1"/>
    <property type="molecule type" value="mRNA"/>
</dbReference>
<dbReference type="EMBL" id="BC103547">
    <property type="protein sequence ID" value="AAI03548.1"/>
    <property type="molecule type" value="mRNA"/>
</dbReference>
<dbReference type="EMBL" id="BC103548">
    <property type="protein sequence ID" value="AAI03549.1"/>
    <property type="molecule type" value="mRNA"/>
</dbReference>
<dbReference type="CCDS" id="CCDS20492.1"/>
<dbReference type="RefSeq" id="NP_058666.1">
    <property type="nucleotide sequence ID" value="NM_016970.1"/>
</dbReference>
<dbReference type="PDB" id="3FF8">
    <property type="method" value="X-ray"/>
    <property type="resolution" value="2.00 A"/>
    <property type="chains" value="C/D=75-188"/>
</dbReference>
<dbReference type="PDB" id="3FF9">
    <property type="method" value="X-ray"/>
    <property type="resolution" value="1.80 A"/>
    <property type="chains" value="A/B=75-188"/>
</dbReference>
<dbReference type="PDBsum" id="3FF8"/>
<dbReference type="PDBsum" id="3FF9"/>
<dbReference type="SMR" id="O88713"/>
<dbReference type="FunCoup" id="O88713">
    <property type="interactions" value="100"/>
</dbReference>
<dbReference type="STRING" id="10090.ENSMUSP00000032207"/>
<dbReference type="GlyCosmos" id="O88713">
    <property type="glycosylation" value="2 sites, No reported glycans"/>
</dbReference>
<dbReference type="GlyGen" id="O88713">
    <property type="glycosylation" value="2 sites"/>
</dbReference>
<dbReference type="iPTMnet" id="O88713"/>
<dbReference type="PhosphoSitePlus" id="O88713"/>
<dbReference type="PaxDb" id="10090-ENSMUSP00000032207"/>
<dbReference type="Antibodypedia" id="23119">
    <property type="antibodies" value="453 antibodies from 35 providers"/>
</dbReference>
<dbReference type="DNASU" id="50928"/>
<dbReference type="Ensembl" id="ENSMUST00000032207.9">
    <property type="protein sequence ID" value="ENSMUSP00000032207.9"/>
    <property type="gene ID" value="ENSMUSG00000030114.9"/>
</dbReference>
<dbReference type="GeneID" id="50928"/>
<dbReference type="KEGG" id="mmu:50928"/>
<dbReference type="UCSC" id="uc009dov.2">
    <property type="organism name" value="mouse"/>
</dbReference>
<dbReference type="AGR" id="MGI:1355294"/>
<dbReference type="CTD" id="10219"/>
<dbReference type="MGI" id="MGI:1355294">
    <property type="gene designation" value="Klrg1"/>
</dbReference>
<dbReference type="VEuPathDB" id="HostDB:ENSMUSG00000030114"/>
<dbReference type="eggNOG" id="KOG4297">
    <property type="taxonomic scope" value="Eukaryota"/>
</dbReference>
<dbReference type="GeneTree" id="ENSGT00940000156296"/>
<dbReference type="HOGENOM" id="CLU_049894_8_3_1"/>
<dbReference type="InParanoid" id="O88713"/>
<dbReference type="OMA" id="SCPDFWM"/>
<dbReference type="OrthoDB" id="6133475at2759"/>
<dbReference type="PhylomeDB" id="O88713"/>
<dbReference type="TreeFam" id="TF336674"/>
<dbReference type="BioGRID-ORCS" id="50928">
    <property type="hits" value="4 hits in 78 CRISPR screens"/>
</dbReference>
<dbReference type="EvolutionaryTrace" id="O88713"/>
<dbReference type="PRO" id="PR:O88713"/>
<dbReference type="Proteomes" id="UP000000589">
    <property type="component" value="Chromosome 6"/>
</dbReference>
<dbReference type="RNAct" id="O88713">
    <property type="molecule type" value="protein"/>
</dbReference>
<dbReference type="Bgee" id="ENSMUSG00000030114">
    <property type="expression patterns" value="Expressed in gastrula and 45 other cell types or tissues"/>
</dbReference>
<dbReference type="GO" id="GO:0043231">
    <property type="term" value="C:intracellular membrane-bounded organelle"/>
    <property type="evidence" value="ECO:0007669"/>
    <property type="project" value="Ensembl"/>
</dbReference>
<dbReference type="GO" id="GO:0005886">
    <property type="term" value="C:plasma membrane"/>
    <property type="evidence" value="ECO:0000304"/>
    <property type="project" value="Reactome"/>
</dbReference>
<dbReference type="GO" id="GO:0030246">
    <property type="term" value="F:carbohydrate binding"/>
    <property type="evidence" value="ECO:0000304"/>
    <property type="project" value="MGI"/>
</dbReference>
<dbReference type="GO" id="GO:0007166">
    <property type="term" value="P:cell surface receptor signaling pathway"/>
    <property type="evidence" value="ECO:0000304"/>
    <property type="project" value="MGI"/>
</dbReference>
<dbReference type="GO" id="GO:0045087">
    <property type="term" value="P:innate immune response"/>
    <property type="evidence" value="ECO:0007669"/>
    <property type="project" value="UniProtKB-KW"/>
</dbReference>
<dbReference type="CDD" id="cd03593">
    <property type="entry name" value="CLECT_NK_receptors_like"/>
    <property type="match status" value="1"/>
</dbReference>
<dbReference type="FunFam" id="3.10.100.10:FF:000176">
    <property type="entry name" value="Killer cell lectin-like receptor subfamily G member 1"/>
    <property type="match status" value="1"/>
</dbReference>
<dbReference type="Gene3D" id="3.10.100.10">
    <property type="entry name" value="Mannose-Binding Protein A, subunit A"/>
    <property type="match status" value="1"/>
</dbReference>
<dbReference type="InterPro" id="IPR001304">
    <property type="entry name" value="C-type_lectin-like"/>
</dbReference>
<dbReference type="InterPro" id="IPR016186">
    <property type="entry name" value="C-type_lectin-like/link_sf"/>
</dbReference>
<dbReference type="InterPro" id="IPR016187">
    <property type="entry name" value="CTDL_fold"/>
</dbReference>
<dbReference type="InterPro" id="IPR042190">
    <property type="entry name" value="KLRG1"/>
</dbReference>
<dbReference type="InterPro" id="IPR033992">
    <property type="entry name" value="NKR-like_CTLD"/>
</dbReference>
<dbReference type="PANTHER" id="PTHR47648">
    <property type="entry name" value="KILLER CELL LECTIN-LIKE RECEPTOR SUBFAMILY G MEMBER 1"/>
    <property type="match status" value="1"/>
</dbReference>
<dbReference type="PANTHER" id="PTHR47648:SF1">
    <property type="entry name" value="KILLER CELL LECTIN-LIKE RECEPTOR SUBFAMILY G MEMBER 1"/>
    <property type="match status" value="1"/>
</dbReference>
<dbReference type="Pfam" id="PF00059">
    <property type="entry name" value="Lectin_C"/>
    <property type="match status" value="1"/>
</dbReference>
<dbReference type="SMART" id="SM00034">
    <property type="entry name" value="CLECT"/>
    <property type="match status" value="1"/>
</dbReference>
<dbReference type="SUPFAM" id="SSF56436">
    <property type="entry name" value="C-type lectin-like"/>
    <property type="match status" value="1"/>
</dbReference>
<dbReference type="PROSITE" id="PS50041">
    <property type="entry name" value="C_TYPE_LECTIN_2"/>
    <property type="match status" value="1"/>
</dbReference>
<evidence type="ECO:0000250" key="1"/>
<evidence type="ECO:0000255" key="2"/>
<evidence type="ECO:0000255" key="3">
    <source>
        <dbReference type="PROSITE-ProRule" id="PRU00040"/>
    </source>
</evidence>
<evidence type="ECO:0000269" key="4">
    <source>
    </source>
</evidence>
<evidence type="ECO:0000269" key="5">
    <source>
    </source>
</evidence>
<evidence type="ECO:0000269" key="6">
    <source>
    </source>
</evidence>
<evidence type="ECO:0000269" key="7">
    <source>
    </source>
</evidence>
<evidence type="ECO:0000269" key="8">
    <source>
    </source>
</evidence>
<evidence type="ECO:0000269" key="9">
    <source>
    </source>
</evidence>
<evidence type="ECO:0000305" key="10"/>
<evidence type="ECO:0007829" key="11">
    <source>
        <dbReference type="PDB" id="3FF9"/>
    </source>
</evidence>
<sequence>MADSSIYSTLELPEAPQVQDESRWKLKAVLHRPHLSRFAMVALGLLTVILMSLLMYQRILCCGSKDSTCSHCPSCPILWTRNGSHCYYFSMEKKDWNSSLKFCADKGSHLLTFPDNQGVKLFGEYLGQDFYWIGLRNIDGWRWEGGPALSLRILTNSLIQRCGAIHRNGLQASSCEVALQWICKKVLY</sequence>
<accession>O88713</accession>
<accession>Q3T1F0</accession>
<feature type="chain" id="PRO_0000331257" description="Killer cell lectin-like receptor subfamily G member 1">
    <location>
        <begin position="1"/>
        <end position="188"/>
    </location>
</feature>
<feature type="topological domain" description="Cytoplasmic" evidence="2">
    <location>
        <begin position="1"/>
        <end position="33"/>
    </location>
</feature>
<feature type="transmembrane region" description="Helical; Signal-anchor for type II membrane protein" evidence="2">
    <location>
        <begin position="34"/>
        <end position="56"/>
    </location>
</feature>
<feature type="topological domain" description="Extracellular" evidence="2">
    <location>
        <begin position="57"/>
        <end position="188"/>
    </location>
</feature>
<feature type="domain" description="C-type lectin" evidence="3">
    <location>
        <begin position="82"/>
        <end position="184"/>
    </location>
</feature>
<feature type="short sequence motif" description="ITIM motif">
    <location>
        <begin position="5"/>
        <end position="10"/>
    </location>
</feature>
<feature type="glycosylation site" description="N-linked (GlcNAc...) asparagine" evidence="2">
    <location>
        <position position="82"/>
    </location>
</feature>
<feature type="glycosylation site" description="N-linked (GlcNAc...) asparagine" evidence="2">
    <location>
        <position position="97"/>
    </location>
</feature>
<feature type="disulfide bond" evidence="3 7">
    <location>
        <begin position="75"/>
        <end position="86"/>
    </location>
</feature>
<feature type="disulfide bond" evidence="3 7">
    <location>
        <begin position="103"/>
        <end position="183"/>
    </location>
</feature>
<feature type="disulfide bond" evidence="3 7">
    <location>
        <begin position="162"/>
        <end position="175"/>
    </location>
</feature>
<feature type="mutagenesis site" description="Decreases association with PTPN11." evidence="6">
    <original>S</original>
    <variation>A</variation>
    <location>
        <position position="5"/>
    </location>
</feature>
<feature type="mutagenesis site" description="Abolishes the formation of KLRG1/PTPN11 and KLRG1/INPP5D." evidence="6">
    <original>Y</original>
    <variation>F</variation>
    <location>
        <position position="7"/>
    </location>
</feature>
<feature type="mutagenesis site" description="Enhances association with PTPN11." evidence="6">
    <original>S</original>
    <variation>A</variation>
    <location>
        <position position="8"/>
    </location>
</feature>
<feature type="mutagenesis site" description="Abrogates completely INPP5D recruitment." evidence="6">
    <original>L</original>
    <variation>A</variation>
    <location>
        <position position="10"/>
    </location>
</feature>
<feature type="sequence conflict" description="In Ref. 6; AAI01954." evidence="10" ref="6">
    <location>
        <position position="120"/>
    </location>
</feature>
<feature type="strand" evidence="11">
    <location>
        <begin position="80"/>
        <end position="82"/>
    </location>
</feature>
<feature type="strand" evidence="11">
    <location>
        <begin position="85"/>
        <end position="89"/>
    </location>
</feature>
<feature type="helix" evidence="11">
    <location>
        <begin position="96"/>
        <end position="105"/>
    </location>
</feature>
<feature type="helix" evidence="11">
    <location>
        <begin position="119"/>
        <end position="123"/>
    </location>
</feature>
<feature type="strand" evidence="11">
    <location>
        <begin position="131"/>
        <end position="143"/>
    </location>
</feature>
<feature type="strand" evidence="11">
    <location>
        <begin position="162"/>
        <end position="166"/>
    </location>
</feature>
<feature type="strand" evidence="11">
    <location>
        <begin position="169"/>
        <end position="173"/>
    </location>
</feature>
<feature type="strand" evidence="11">
    <location>
        <begin position="179"/>
        <end position="186"/>
    </location>
</feature>
<organism>
    <name type="scientific">Mus musculus</name>
    <name type="common">Mouse</name>
    <dbReference type="NCBI Taxonomy" id="10090"/>
    <lineage>
        <taxon>Eukaryota</taxon>
        <taxon>Metazoa</taxon>
        <taxon>Chordata</taxon>
        <taxon>Craniata</taxon>
        <taxon>Vertebrata</taxon>
        <taxon>Euteleostomi</taxon>
        <taxon>Mammalia</taxon>
        <taxon>Eutheria</taxon>
        <taxon>Euarchontoglires</taxon>
        <taxon>Glires</taxon>
        <taxon>Rodentia</taxon>
        <taxon>Myomorpha</taxon>
        <taxon>Muroidea</taxon>
        <taxon>Muridae</taxon>
        <taxon>Murinae</taxon>
        <taxon>Mus</taxon>
        <taxon>Mus</taxon>
    </lineage>
</organism>
<proteinExistence type="evidence at protein level"/>
<name>KLRG1_MOUSE</name>
<gene>
    <name type="primary">Klrg1</name>
    <name type="synonym">Mafa</name>
</gene>
<keyword id="KW-0002">3D-structure</keyword>
<keyword id="KW-1003">Cell membrane</keyword>
<keyword id="KW-1015">Disulfide bond</keyword>
<keyword id="KW-0325">Glycoprotein</keyword>
<keyword id="KW-0391">Immunity</keyword>
<keyword id="KW-0399">Innate immunity</keyword>
<keyword id="KW-0430">Lectin</keyword>
<keyword id="KW-0472">Membrane</keyword>
<keyword id="KW-0597">Phosphoprotein</keyword>
<keyword id="KW-0675">Receptor</keyword>
<keyword id="KW-1185">Reference proteome</keyword>
<keyword id="KW-0735">Signal-anchor</keyword>
<keyword id="KW-0812">Transmembrane</keyword>
<keyword id="KW-1133">Transmembrane helix</keyword>
<comment type="function">
    <text evidence="7">Plays an inhibitory role on natural killer (NK) cells and T-cell functions upon binding to their non-MHC ligands. May mediate missing self recognition by binding to a highly conserved site on classical cadherins, enabling it to monitor expression of E-cadherin/CDH1, N-cadherin/CDH2 and R-cadherin/CDH4 on target cells.</text>
</comment>
<comment type="subunit">
    <text evidence="1 6 7">Forms a monomer and homodimer; disulfide-linked (By similarity). Interacts (via ITIM motif) with PTPN11 and INPP5D.</text>
</comment>
<comment type="subcellular location">
    <subcellularLocation>
        <location evidence="7">Cell membrane</location>
        <topology evidence="7">Single-pass type II membrane protein</topology>
    </subcellularLocation>
</comment>
<comment type="tissue specificity">
    <text evidence="8 9">Expressed specifically on natural killer (NK) cells and activated CD8 T-cells. Not detected in spleen, thymus, lymph node, testis, brain or kidney. Not detected on mast cell lines, bone marrow-derived mast cells, or peritoneal mast cells.</text>
</comment>
<comment type="induction">
    <text evidence="4 5">By pathogens and viruses infections.</text>
</comment>
<comment type="domain">
    <text>Contains 1 copy of a cytoplasmic motif that is referred to as the immunoreceptor tyrosine-based inhibitor motif (ITIM). This motif is involved in modulation of cellular responses. Upon phosphorylation of ITIM motif KLRG1 associates with the two phosphatases, PTPN11 and INPP5D.</text>
</comment>
<comment type="PTM">
    <text evidence="1">Phosphorylated in response to monoclonal antibody G63 binding and antigenic stimulation.</text>
</comment>
<comment type="online information" name="Functional Glycomics Gateway - Glycan Binding">
    <link uri="http://www.functionalglycomics.org/glycomics/GBPServlet?&amp;operationType=view&amp;cbpId=cbp_mou_Ctlect_176"/>
    <text>MCFA</text>
</comment>
<reference key="1">
    <citation type="journal article" date="1998" name="Eur. J. Immunol.">
        <title>2F1 antigen, the mouse homolog of the rat 'mast cell function-associated antigen', is a lectin-like type II transmembrane receptor expressed by natural killer cells.</title>
        <authorList>
            <person name="Hanke T."/>
            <person name="Corral L."/>
            <person name="Vance R.E."/>
            <person name="Raulet D.H."/>
        </authorList>
    </citation>
    <scope>NUCLEOTIDE SEQUENCE [MRNA]</scope>
    <scope>TISSUE SPECIFICITY</scope>
    <source>
        <strain>CB-17/SCID</strain>
    </source>
</reference>
<reference key="2">
    <citation type="journal article" date="1998" name="J. Immunol.">
        <title>Virus-activated CD8 T cells and lymphokine-activated NK cells express the mast cell function-associated antigen, an inhibitory C-type lectin.</title>
        <authorList>
            <person name="Blaser C."/>
            <person name="Kaufmann M."/>
            <person name="Pircher H."/>
        </authorList>
    </citation>
    <scope>NUCLEOTIDE SEQUENCE [MRNA]</scope>
    <scope>TISSUE SPECIFICITY</scope>
</reference>
<reference key="3">
    <citation type="journal article" date="2001" name="Immunogenetics">
        <title>Genomic structure, alternative splicing, and physical mapping of the killer cell lectin-like receptor G1 gene (KLRG1), the mouse homologue of MAFA.</title>
        <authorList>
            <person name="Voehringer D."/>
            <person name="Kaufmann M."/>
            <person name="Pircher H."/>
        </authorList>
    </citation>
    <scope>NUCLEOTIDE SEQUENCE [GENOMIC DNA]</scope>
    <source>
        <strain>129/SvEvTacfBr</strain>
        <tissue>Spleen</tissue>
    </source>
</reference>
<reference key="4">
    <citation type="journal article" date="2001" name="J. Immunol.">
        <title>Viral infections induce abundant numbers of senescent CD8 T cells.</title>
        <authorList>
            <person name="Voehringer D."/>
            <person name="Blaser C."/>
            <person name="Brawand P."/>
            <person name="Raulet D.H."/>
            <person name="Hanke T."/>
            <person name="Pircher H."/>
        </authorList>
    </citation>
    <scope>INDUCTION BY VIRAL INFECTIONS</scope>
</reference>
<reference key="5">
    <citation type="journal article" date="2002" name="J. Immunol.">
        <title>Inhibitory functions of the killer cell lectin-like receptor G1 molecule during the activation of mouse NK cells.</title>
        <authorList>
            <person name="Robbins S.H."/>
            <person name="Nguyen K.B."/>
            <person name="Takahashi N."/>
            <person name="Mikayama T."/>
            <person name="Biron C.A."/>
            <person name="Brossay L."/>
        </authorList>
    </citation>
    <scope>INDUCTION BY PATHOGENS INFECTIONS</scope>
</reference>
<reference key="6">
    <citation type="journal article" date="2004" name="Genome Res.">
        <title>The status, quality, and expansion of the NIH full-length cDNA project: the Mammalian Gene Collection (MGC).</title>
        <authorList>
            <consortium name="The MGC Project Team"/>
        </authorList>
    </citation>
    <scope>NUCLEOTIDE SEQUENCE [LARGE SCALE MRNA]</scope>
</reference>
<reference key="7">
    <citation type="journal article" date="2006" name="J. Immunol.">
        <title>Identification of E-cadherin as a ligand for the murine killer cell lectin-like receptor G1.</title>
        <authorList>
            <person name="Gruendemann C."/>
            <person name="Bauer M."/>
            <person name="Schweier O."/>
            <person name="von Oppen N."/>
            <person name="Laessing U."/>
            <person name="Saudan P."/>
            <person name="Becker K.-F."/>
            <person name="Karp K."/>
            <person name="Hanke T."/>
            <person name="Bachmann M.F."/>
            <person name="Pircher H."/>
        </authorList>
    </citation>
    <scope>LIGAND-BINDING</scope>
</reference>
<reference key="8">
    <citation type="journal article" date="2007" name="Int. Immunol.">
        <title>KLRG1 binds cadherins and preferentially associates with SHIP-1.</title>
        <authorList>
            <person name="Tessmer M.S."/>
            <person name="Fugere C."/>
            <person name="Stevenaert F."/>
            <person name="Naidenko O.V."/>
            <person name="Chong H.J."/>
            <person name="Leclercq G."/>
            <person name="Brossay L."/>
        </authorList>
    </citation>
    <scope>LIGAND-BINDING</scope>
    <scope>INTERACTION WITH PTPN11 AND INPP5D</scope>
    <scope>MUTAGENESIS OF SER-5; TYR-7; SER-8 AND LEU-10</scope>
</reference>
<reference key="9">
    <citation type="journal article" date="2009" name="Immunity">
        <title>Structure of natural killer cell receptor KLRG1 bound to E-cadherin reveals basis for MHC-independent missing self recognition.</title>
        <authorList>
            <person name="Li Y."/>
            <person name="Hofmann M."/>
            <person name="Wang Q."/>
            <person name="Teng L."/>
            <person name="Chlewicki L.K."/>
            <person name="Pircher H."/>
            <person name="Mariuzza R.A."/>
        </authorList>
    </citation>
    <scope>X-RAY CRYSTALLOGRAPHY (2.0 ANGSTROMS) OF 75-188 ALONE AND IN COMPLEX WITH HUMAN E-CADHERIN</scope>
    <scope>FUNCTION</scope>
    <scope>SUBCELLULAR LOCATION</scope>
    <scope>DISULFIDE BONDS</scope>
</reference>